<proteinExistence type="inferred from homology"/>
<organism>
    <name type="scientific">Erythrobacter litoralis (strain HTCC2594)</name>
    <dbReference type="NCBI Taxonomy" id="314225"/>
    <lineage>
        <taxon>Bacteria</taxon>
        <taxon>Pseudomonadati</taxon>
        <taxon>Pseudomonadota</taxon>
        <taxon>Alphaproteobacteria</taxon>
        <taxon>Sphingomonadales</taxon>
        <taxon>Erythrobacteraceae</taxon>
        <taxon>Erythrobacter/Porphyrobacter group</taxon>
        <taxon>Erythrobacter</taxon>
    </lineage>
</organism>
<keyword id="KW-0963">Cytoplasm</keyword>
<keyword id="KW-0444">Lipid biosynthesis</keyword>
<keyword id="KW-0443">Lipid metabolism</keyword>
<keyword id="KW-0520">NAD</keyword>
<keyword id="KW-0521">NADP</keyword>
<keyword id="KW-0547">Nucleotide-binding</keyword>
<keyword id="KW-0560">Oxidoreductase</keyword>
<keyword id="KW-0594">Phospholipid biosynthesis</keyword>
<keyword id="KW-1208">Phospholipid metabolism</keyword>
<keyword id="KW-1185">Reference proteome</keyword>
<name>GPDA_ERYLH</name>
<protein>
    <recommendedName>
        <fullName evidence="1">Glycerol-3-phosphate dehydrogenase [NAD(P)+]</fullName>
        <ecNumber evidence="1">1.1.1.94</ecNumber>
    </recommendedName>
    <alternativeName>
        <fullName evidence="1">NAD(P)(+)-dependent glycerol-3-phosphate dehydrogenase</fullName>
    </alternativeName>
    <alternativeName>
        <fullName evidence="1">NAD(P)H-dependent dihydroxyacetone-phosphate reductase</fullName>
    </alternativeName>
</protein>
<evidence type="ECO:0000255" key="1">
    <source>
        <dbReference type="HAMAP-Rule" id="MF_00394"/>
    </source>
</evidence>
<dbReference type="EC" id="1.1.1.94" evidence="1"/>
<dbReference type="EMBL" id="CP000157">
    <property type="protein sequence ID" value="ABC63925.1"/>
    <property type="molecule type" value="Genomic_DNA"/>
</dbReference>
<dbReference type="RefSeq" id="WP_011414753.1">
    <property type="nucleotide sequence ID" value="NC_007722.1"/>
</dbReference>
<dbReference type="SMR" id="Q2N8R6"/>
<dbReference type="STRING" id="314225.ELI_09165"/>
<dbReference type="KEGG" id="eli:ELI_09165"/>
<dbReference type="eggNOG" id="COG0240">
    <property type="taxonomic scope" value="Bacteria"/>
</dbReference>
<dbReference type="HOGENOM" id="CLU_033449_0_2_5"/>
<dbReference type="OrthoDB" id="9812273at2"/>
<dbReference type="UniPathway" id="UPA00940"/>
<dbReference type="Proteomes" id="UP000008808">
    <property type="component" value="Chromosome"/>
</dbReference>
<dbReference type="GO" id="GO:0005829">
    <property type="term" value="C:cytosol"/>
    <property type="evidence" value="ECO:0007669"/>
    <property type="project" value="TreeGrafter"/>
</dbReference>
<dbReference type="GO" id="GO:0047952">
    <property type="term" value="F:glycerol-3-phosphate dehydrogenase [NAD(P)+] activity"/>
    <property type="evidence" value="ECO:0007669"/>
    <property type="project" value="UniProtKB-UniRule"/>
</dbReference>
<dbReference type="GO" id="GO:0051287">
    <property type="term" value="F:NAD binding"/>
    <property type="evidence" value="ECO:0007669"/>
    <property type="project" value="InterPro"/>
</dbReference>
<dbReference type="GO" id="GO:0005975">
    <property type="term" value="P:carbohydrate metabolic process"/>
    <property type="evidence" value="ECO:0007669"/>
    <property type="project" value="InterPro"/>
</dbReference>
<dbReference type="GO" id="GO:0046167">
    <property type="term" value="P:glycerol-3-phosphate biosynthetic process"/>
    <property type="evidence" value="ECO:0007669"/>
    <property type="project" value="UniProtKB-UniRule"/>
</dbReference>
<dbReference type="GO" id="GO:0046168">
    <property type="term" value="P:glycerol-3-phosphate catabolic process"/>
    <property type="evidence" value="ECO:0007669"/>
    <property type="project" value="InterPro"/>
</dbReference>
<dbReference type="GO" id="GO:0006650">
    <property type="term" value="P:glycerophospholipid metabolic process"/>
    <property type="evidence" value="ECO:0007669"/>
    <property type="project" value="UniProtKB-UniRule"/>
</dbReference>
<dbReference type="GO" id="GO:0008654">
    <property type="term" value="P:phospholipid biosynthetic process"/>
    <property type="evidence" value="ECO:0007669"/>
    <property type="project" value="UniProtKB-KW"/>
</dbReference>
<dbReference type="FunFam" id="1.10.1040.10:FF:000001">
    <property type="entry name" value="Glycerol-3-phosphate dehydrogenase [NAD(P)+]"/>
    <property type="match status" value="1"/>
</dbReference>
<dbReference type="FunFam" id="3.40.50.720:FF:000019">
    <property type="entry name" value="Glycerol-3-phosphate dehydrogenase [NAD(P)+]"/>
    <property type="match status" value="1"/>
</dbReference>
<dbReference type="Gene3D" id="1.10.1040.10">
    <property type="entry name" value="N-(1-d-carboxylethyl)-l-norvaline Dehydrogenase, domain 2"/>
    <property type="match status" value="1"/>
</dbReference>
<dbReference type="Gene3D" id="3.40.50.720">
    <property type="entry name" value="NAD(P)-binding Rossmann-like Domain"/>
    <property type="match status" value="1"/>
</dbReference>
<dbReference type="HAMAP" id="MF_00394">
    <property type="entry name" value="NAD_Glyc3P_dehydrog"/>
    <property type="match status" value="1"/>
</dbReference>
<dbReference type="InterPro" id="IPR008927">
    <property type="entry name" value="6-PGluconate_DH-like_C_sf"/>
</dbReference>
<dbReference type="InterPro" id="IPR013328">
    <property type="entry name" value="6PGD_dom2"/>
</dbReference>
<dbReference type="InterPro" id="IPR006168">
    <property type="entry name" value="G3P_DH_NAD-dep"/>
</dbReference>
<dbReference type="InterPro" id="IPR006109">
    <property type="entry name" value="G3P_DH_NAD-dep_C"/>
</dbReference>
<dbReference type="InterPro" id="IPR011128">
    <property type="entry name" value="G3P_DH_NAD-dep_N"/>
</dbReference>
<dbReference type="InterPro" id="IPR036291">
    <property type="entry name" value="NAD(P)-bd_dom_sf"/>
</dbReference>
<dbReference type="NCBIfam" id="NF000940">
    <property type="entry name" value="PRK00094.1-2"/>
    <property type="match status" value="1"/>
</dbReference>
<dbReference type="NCBIfam" id="NF000942">
    <property type="entry name" value="PRK00094.1-4"/>
    <property type="match status" value="1"/>
</dbReference>
<dbReference type="PANTHER" id="PTHR11728">
    <property type="entry name" value="GLYCEROL-3-PHOSPHATE DEHYDROGENASE"/>
    <property type="match status" value="1"/>
</dbReference>
<dbReference type="PANTHER" id="PTHR11728:SF1">
    <property type="entry name" value="GLYCEROL-3-PHOSPHATE DEHYDROGENASE [NAD(+)] 2, CHLOROPLASTIC"/>
    <property type="match status" value="1"/>
</dbReference>
<dbReference type="Pfam" id="PF07479">
    <property type="entry name" value="NAD_Gly3P_dh_C"/>
    <property type="match status" value="1"/>
</dbReference>
<dbReference type="Pfam" id="PF01210">
    <property type="entry name" value="NAD_Gly3P_dh_N"/>
    <property type="match status" value="1"/>
</dbReference>
<dbReference type="PIRSF" id="PIRSF000114">
    <property type="entry name" value="Glycerol-3-P_dh"/>
    <property type="match status" value="1"/>
</dbReference>
<dbReference type="PRINTS" id="PR00077">
    <property type="entry name" value="GPDHDRGNASE"/>
</dbReference>
<dbReference type="SUPFAM" id="SSF48179">
    <property type="entry name" value="6-phosphogluconate dehydrogenase C-terminal domain-like"/>
    <property type="match status" value="1"/>
</dbReference>
<dbReference type="SUPFAM" id="SSF51735">
    <property type="entry name" value="NAD(P)-binding Rossmann-fold domains"/>
    <property type="match status" value="1"/>
</dbReference>
<dbReference type="PROSITE" id="PS00957">
    <property type="entry name" value="NAD_G3PDH"/>
    <property type="match status" value="1"/>
</dbReference>
<gene>
    <name evidence="1" type="primary">gpsA</name>
    <name type="ordered locus">ELI_09165</name>
</gene>
<accession>Q2N8R6</accession>
<reference key="1">
    <citation type="journal article" date="2009" name="J. Bacteriol.">
        <title>Complete genome sequence of Erythrobacter litoralis HTCC2594.</title>
        <authorList>
            <person name="Oh H.M."/>
            <person name="Giovannoni S.J."/>
            <person name="Ferriera S."/>
            <person name="Johnson J."/>
            <person name="Cho J.C."/>
        </authorList>
    </citation>
    <scope>NUCLEOTIDE SEQUENCE [LARGE SCALE GENOMIC DNA]</scope>
    <source>
        <strain>HTCC2594</strain>
    </source>
</reference>
<feature type="chain" id="PRO_1000049503" description="Glycerol-3-phosphate dehydrogenase [NAD(P)+]">
    <location>
        <begin position="1"/>
        <end position="330"/>
    </location>
</feature>
<feature type="active site" description="Proton acceptor" evidence="1">
    <location>
        <position position="186"/>
    </location>
</feature>
<feature type="binding site" evidence="1">
    <location>
        <position position="13"/>
    </location>
    <ligand>
        <name>NADPH</name>
        <dbReference type="ChEBI" id="CHEBI:57783"/>
    </ligand>
</feature>
<feature type="binding site" evidence="1">
    <location>
        <position position="33"/>
    </location>
    <ligand>
        <name>NADPH</name>
        <dbReference type="ChEBI" id="CHEBI:57783"/>
    </ligand>
</feature>
<feature type="binding site" evidence="1">
    <location>
        <position position="103"/>
    </location>
    <ligand>
        <name>NADPH</name>
        <dbReference type="ChEBI" id="CHEBI:57783"/>
    </ligand>
</feature>
<feature type="binding site" evidence="1">
    <location>
        <position position="103"/>
    </location>
    <ligand>
        <name>sn-glycerol 3-phosphate</name>
        <dbReference type="ChEBI" id="CHEBI:57597"/>
    </ligand>
</feature>
<feature type="binding site" evidence="1">
    <location>
        <position position="131"/>
    </location>
    <ligand>
        <name>sn-glycerol 3-phosphate</name>
        <dbReference type="ChEBI" id="CHEBI:57597"/>
    </ligand>
</feature>
<feature type="binding site" evidence="1">
    <location>
        <position position="133"/>
    </location>
    <ligand>
        <name>sn-glycerol 3-phosphate</name>
        <dbReference type="ChEBI" id="CHEBI:57597"/>
    </ligand>
</feature>
<feature type="binding site" evidence="1">
    <location>
        <position position="135"/>
    </location>
    <ligand>
        <name>NADPH</name>
        <dbReference type="ChEBI" id="CHEBI:57783"/>
    </ligand>
</feature>
<feature type="binding site" evidence="1">
    <location>
        <position position="186"/>
    </location>
    <ligand>
        <name>sn-glycerol 3-phosphate</name>
        <dbReference type="ChEBI" id="CHEBI:57597"/>
    </ligand>
</feature>
<feature type="binding site" evidence="1">
    <location>
        <position position="239"/>
    </location>
    <ligand>
        <name>sn-glycerol 3-phosphate</name>
        <dbReference type="ChEBI" id="CHEBI:57597"/>
    </ligand>
</feature>
<feature type="binding site" evidence="1">
    <location>
        <position position="249"/>
    </location>
    <ligand>
        <name>sn-glycerol 3-phosphate</name>
        <dbReference type="ChEBI" id="CHEBI:57597"/>
    </ligand>
</feature>
<feature type="binding site" evidence="1">
    <location>
        <position position="250"/>
    </location>
    <ligand>
        <name>NADPH</name>
        <dbReference type="ChEBI" id="CHEBI:57783"/>
    </ligand>
</feature>
<feature type="binding site" evidence="1">
    <location>
        <position position="250"/>
    </location>
    <ligand>
        <name>sn-glycerol 3-phosphate</name>
        <dbReference type="ChEBI" id="CHEBI:57597"/>
    </ligand>
</feature>
<feature type="binding site" evidence="1">
    <location>
        <position position="251"/>
    </location>
    <ligand>
        <name>sn-glycerol 3-phosphate</name>
        <dbReference type="ChEBI" id="CHEBI:57597"/>
    </ligand>
</feature>
<feature type="binding site" evidence="1">
    <location>
        <position position="274"/>
    </location>
    <ligand>
        <name>NADPH</name>
        <dbReference type="ChEBI" id="CHEBI:57783"/>
    </ligand>
</feature>
<feature type="binding site" evidence="1">
    <location>
        <position position="276"/>
    </location>
    <ligand>
        <name>NADPH</name>
        <dbReference type="ChEBI" id="CHEBI:57783"/>
    </ligand>
</feature>
<sequence length="330" mass="34079">MTAEIAVLGGGAWGTALAQMLASDGQDVLLWARESEVVAEVNADHLNSIYLPGARLAENIKATGEVSDLSAIPTLLVVTPAQHMGAVLKTLPENPRDLVLCSKGIEQDTGRLMNDVAAEACPDSEIAILSGPTFAHEVAAGLPTAVTLACSSREQWERLKPLIARPAFRPYYSDDVSGAEIGGAVKNVLAIACGVVDGLGLGQNARAALIARGYAEMLRFGEALGAQAETLAGLCGLGDLVLTCSSTSSRNFSLGKALGEGRTAADLMADRTTVAEGAYTAPVLAELAEAKGVDMPIVQAVNRIIAGADAQAVVAQLLARPLRAEHESDA</sequence>
<comment type="function">
    <text evidence="1">Catalyzes the reduction of the glycolytic intermediate dihydroxyacetone phosphate (DHAP) to sn-glycerol 3-phosphate (G3P), the key precursor for phospholipid synthesis.</text>
</comment>
<comment type="catalytic activity">
    <reaction evidence="1">
        <text>sn-glycerol 3-phosphate + NAD(+) = dihydroxyacetone phosphate + NADH + H(+)</text>
        <dbReference type="Rhea" id="RHEA:11092"/>
        <dbReference type="ChEBI" id="CHEBI:15378"/>
        <dbReference type="ChEBI" id="CHEBI:57540"/>
        <dbReference type="ChEBI" id="CHEBI:57597"/>
        <dbReference type="ChEBI" id="CHEBI:57642"/>
        <dbReference type="ChEBI" id="CHEBI:57945"/>
        <dbReference type="EC" id="1.1.1.94"/>
    </reaction>
    <physiologicalReaction direction="right-to-left" evidence="1">
        <dbReference type="Rhea" id="RHEA:11094"/>
    </physiologicalReaction>
</comment>
<comment type="catalytic activity">
    <reaction evidence="1">
        <text>sn-glycerol 3-phosphate + NADP(+) = dihydroxyacetone phosphate + NADPH + H(+)</text>
        <dbReference type="Rhea" id="RHEA:11096"/>
        <dbReference type="ChEBI" id="CHEBI:15378"/>
        <dbReference type="ChEBI" id="CHEBI:57597"/>
        <dbReference type="ChEBI" id="CHEBI:57642"/>
        <dbReference type="ChEBI" id="CHEBI:57783"/>
        <dbReference type="ChEBI" id="CHEBI:58349"/>
        <dbReference type="EC" id="1.1.1.94"/>
    </reaction>
    <physiologicalReaction direction="right-to-left" evidence="1">
        <dbReference type="Rhea" id="RHEA:11098"/>
    </physiologicalReaction>
</comment>
<comment type="pathway">
    <text evidence="1">Membrane lipid metabolism; glycerophospholipid metabolism.</text>
</comment>
<comment type="subcellular location">
    <subcellularLocation>
        <location evidence="1">Cytoplasm</location>
    </subcellularLocation>
</comment>
<comment type="similarity">
    <text evidence="1">Belongs to the NAD-dependent glycerol-3-phosphate dehydrogenase family.</text>
</comment>